<reference key="1">
    <citation type="journal article" date="1999" name="Genetics">
        <title>Divergence of the hyperthermophilic archaea Pyrococcus furiosus and P. horikoshii inferred from complete genomic sequences.</title>
        <authorList>
            <person name="Maeder D.L."/>
            <person name="Weiss R.B."/>
            <person name="Dunn D.M."/>
            <person name="Cherry J.L."/>
            <person name="Gonzalez J.M."/>
            <person name="DiRuggiero J."/>
            <person name="Robb F.T."/>
        </authorList>
    </citation>
    <scope>NUCLEOTIDE SEQUENCE [LARGE SCALE GENOMIC DNA]</scope>
    <source>
        <strain>ATCC 43587 / DSM 3638 / JCM 8422 / Vc1</strain>
    </source>
</reference>
<sequence length="119" mass="13157">MGFRYKQVIVARSDLKLSKGKLAVQVAHGAVTAAFEAYKKKREWFEAWFREGQKKVVVKAQNEEELFKLKSEAEKLGLPTALIRDAGLTEIPPGTITVLAIGPGPEEVVDKVTGHLKLL</sequence>
<keyword id="KW-0963">Cytoplasm</keyword>
<keyword id="KW-0378">Hydrolase</keyword>
<keyword id="KW-1185">Reference proteome</keyword>
<protein>
    <recommendedName>
        <fullName evidence="1">Peptidyl-tRNA hydrolase</fullName>
        <shortName evidence="1">PTH</shortName>
        <ecNumber evidence="1">3.1.1.29</ecNumber>
    </recommendedName>
</protein>
<evidence type="ECO:0000255" key="1">
    <source>
        <dbReference type="HAMAP-Rule" id="MF_00628"/>
    </source>
</evidence>
<feature type="chain" id="PRO_0000120300" description="Peptidyl-tRNA hydrolase">
    <location>
        <begin position="1"/>
        <end position="119"/>
    </location>
</feature>
<dbReference type="EC" id="3.1.1.29" evidence="1"/>
<dbReference type="EMBL" id="AE009950">
    <property type="protein sequence ID" value="AAL81680.1"/>
    <property type="molecule type" value="Genomic_DNA"/>
</dbReference>
<dbReference type="SMR" id="Q8U0N0"/>
<dbReference type="STRING" id="186497.PF1556"/>
<dbReference type="PaxDb" id="186497-PF1556"/>
<dbReference type="KEGG" id="pfu:PF1556"/>
<dbReference type="PATRIC" id="fig|186497.12.peg.1622"/>
<dbReference type="eggNOG" id="arCOG04228">
    <property type="taxonomic scope" value="Archaea"/>
</dbReference>
<dbReference type="HOGENOM" id="CLU_073661_2_2_2"/>
<dbReference type="OrthoDB" id="6075at2157"/>
<dbReference type="PhylomeDB" id="Q8U0N0"/>
<dbReference type="Proteomes" id="UP000001013">
    <property type="component" value="Chromosome"/>
</dbReference>
<dbReference type="GO" id="GO:0005829">
    <property type="term" value="C:cytosol"/>
    <property type="evidence" value="ECO:0007669"/>
    <property type="project" value="TreeGrafter"/>
</dbReference>
<dbReference type="GO" id="GO:0004045">
    <property type="term" value="F:peptidyl-tRNA hydrolase activity"/>
    <property type="evidence" value="ECO:0007669"/>
    <property type="project" value="UniProtKB-UniRule"/>
</dbReference>
<dbReference type="GO" id="GO:0006412">
    <property type="term" value="P:translation"/>
    <property type="evidence" value="ECO:0007669"/>
    <property type="project" value="UniProtKB-UniRule"/>
</dbReference>
<dbReference type="CDD" id="cd02430">
    <property type="entry name" value="PTH2"/>
    <property type="match status" value="1"/>
</dbReference>
<dbReference type="FunFam" id="3.40.1490.10:FF:000001">
    <property type="entry name" value="Peptidyl-tRNA hydrolase 2"/>
    <property type="match status" value="1"/>
</dbReference>
<dbReference type="Gene3D" id="3.40.1490.10">
    <property type="entry name" value="Bit1"/>
    <property type="match status" value="1"/>
</dbReference>
<dbReference type="HAMAP" id="MF_00628">
    <property type="entry name" value="Pept_tRNA_hydro_arch"/>
    <property type="match status" value="1"/>
</dbReference>
<dbReference type="InterPro" id="IPR023476">
    <property type="entry name" value="Pep_tRNA_hydro_II_dom_sf"/>
</dbReference>
<dbReference type="InterPro" id="IPR034759">
    <property type="entry name" value="Pept_tRNA_hydro_arch"/>
</dbReference>
<dbReference type="InterPro" id="IPR002833">
    <property type="entry name" value="PTH2"/>
</dbReference>
<dbReference type="NCBIfam" id="TIGR00283">
    <property type="entry name" value="arch_pth2"/>
    <property type="match status" value="1"/>
</dbReference>
<dbReference type="NCBIfam" id="NF003314">
    <property type="entry name" value="PRK04322.1"/>
    <property type="match status" value="1"/>
</dbReference>
<dbReference type="PANTHER" id="PTHR12649">
    <property type="entry name" value="PEPTIDYL-TRNA HYDROLASE 2"/>
    <property type="match status" value="1"/>
</dbReference>
<dbReference type="PANTHER" id="PTHR12649:SF11">
    <property type="entry name" value="PEPTIDYL-TRNA HYDROLASE 2, MITOCHONDRIAL"/>
    <property type="match status" value="1"/>
</dbReference>
<dbReference type="Pfam" id="PF01981">
    <property type="entry name" value="PTH2"/>
    <property type="match status" value="1"/>
</dbReference>
<dbReference type="SUPFAM" id="SSF102462">
    <property type="entry name" value="Peptidyl-tRNA hydrolase II"/>
    <property type="match status" value="1"/>
</dbReference>
<proteinExistence type="inferred from homology"/>
<organism>
    <name type="scientific">Pyrococcus furiosus (strain ATCC 43587 / DSM 3638 / JCM 8422 / Vc1)</name>
    <dbReference type="NCBI Taxonomy" id="186497"/>
    <lineage>
        <taxon>Archaea</taxon>
        <taxon>Methanobacteriati</taxon>
        <taxon>Methanobacteriota</taxon>
        <taxon>Thermococci</taxon>
        <taxon>Thermococcales</taxon>
        <taxon>Thermococcaceae</taxon>
        <taxon>Pyrococcus</taxon>
    </lineage>
</organism>
<name>PTH_PYRFU</name>
<accession>Q8U0N0</accession>
<comment type="function">
    <text evidence="1">The natural substrate for this enzyme may be peptidyl-tRNAs which drop off the ribosome during protein synthesis.</text>
</comment>
<comment type="catalytic activity">
    <reaction evidence="1">
        <text>an N-acyl-L-alpha-aminoacyl-tRNA + H2O = an N-acyl-L-amino acid + a tRNA + H(+)</text>
        <dbReference type="Rhea" id="RHEA:54448"/>
        <dbReference type="Rhea" id="RHEA-COMP:10123"/>
        <dbReference type="Rhea" id="RHEA-COMP:13883"/>
        <dbReference type="ChEBI" id="CHEBI:15377"/>
        <dbReference type="ChEBI" id="CHEBI:15378"/>
        <dbReference type="ChEBI" id="CHEBI:59874"/>
        <dbReference type="ChEBI" id="CHEBI:78442"/>
        <dbReference type="ChEBI" id="CHEBI:138191"/>
        <dbReference type="EC" id="3.1.1.29"/>
    </reaction>
</comment>
<comment type="subcellular location">
    <subcellularLocation>
        <location evidence="1">Cytoplasm</location>
    </subcellularLocation>
</comment>
<comment type="similarity">
    <text evidence="1">Belongs to the PTH2 family.</text>
</comment>
<gene>
    <name evidence="1" type="primary">pth</name>
    <name type="ordered locus">PF1556</name>
</gene>